<evidence type="ECO:0000250" key="1"/>
<evidence type="ECO:0000255" key="2"/>
<evidence type="ECO:0000305" key="3"/>
<sequence>MSLTRLLIRDFRNIETADLALSPGFNFLVGANGSGKTSVLEAIYTLGHGRAFRSLQIGRVIRHEQEAFVLHGRLQGEERETAIGLTKDKQGDSKVRIDGTDGHKVAELAHLMPMQLITPEGFTLLNGGPKYRRAFLDWGCFHNEPGFFTAWSNLKRLLKQRNAALRQVTRYEQLRPWDKELIPLAEQISTWRAEYSAGIAADMADTCKQFLPEFSLTFSFQRGWEKETEYAEVLERNFERDRQLTYTAHGPHKADLRIRADGAPVEDTLSRGQLKLLMCALRLAQGEFLTRESGRRCLYLIDDFASELDDERRGLLASRLKATQSQVFVSAISAEHVIDMSDENSKMFTVEKGKITD</sequence>
<gene>
    <name type="primary">recF</name>
    <name type="synonym">uvrF</name>
    <name type="ordered locus">c4622</name>
</gene>
<feature type="initiator methionine" description="Removed" evidence="1">
    <location>
        <position position="1"/>
    </location>
</feature>
<feature type="chain" id="PRO_0000196416" description="DNA replication and repair protein RecF">
    <location>
        <begin position="2"/>
        <end position="357"/>
    </location>
</feature>
<feature type="binding site" evidence="2">
    <location>
        <begin position="30"/>
        <end position="37"/>
    </location>
    <ligand>
        <name>ATP</name>
        <dbReference type="ChEBI" id="CHEBI:30616"/>
    </ligand>
</feature>
<proteinExistence type="inferred from homology"/>
<reference key="1">
    <citation type="journal article" date="2002" name="Proc. Natl. Acad. Sci. U.S.A.">
        <title>Extensive mosaic structure revealed by the complete genome sequence of uropathogenic Escherichia coli.</title>
        <authorList>
            <person name="Welch R.A."/>
            <person name="Burland V."/>
            <person name="Plunkett G. III"/>
            <person name="Redford P."/>
            <person name="Roesch P."/>
            <person name="Rasko D."/>
            <person name="Buckles E.L."/>
            <person name="Liou S.-R."/>
            <person name="Boutin A."/>
            <person name="Hackett J."/>
            <person name="Stroud D."/>
            <person name="Mayhew G.F."/>
            <person name="Rose D.J."/>
            <person name="Zhou S."/>
            <person name="Schwartz D.C."/>
            <person name="Perna N.T."/>
            <person name="Mobley H.L.T."/>
            <person name="Donnenberg M.S."/>
            <person name="Blattner F.R."/>
        </authorList>
    </citation>
    <scope>NUCLEOTIDE SEQUENCE [LARGE SCALE GENOMIC DNA]</scope>
    <source>
        <strain>CFT073 / ATCC 700928 / UPEC</strain>
    </source>
</reference>
<name>RECF_ECOL6</name>
<organism>
    <name type="scientific">Escherichia coli O6:H1 (strain CFT073 / ATCC 700928 / UPEC)</name>
    <dbReference type="NCBI Taxonomy" id="199310"/>
    <lineage>
        <taxon>Bacteria</taxon>
        <taxon>Pseudomonadati</taxon>
        <taxon>Pseudomonadota</taxon>
        <taxon>Gammaproteobacteria</taxon>
        <taxon>Enterobacterales</taxon>
        <taxon>Enterobacteriaceae</taxon>
        <taxon>Escherichia</taxon>
    </lineage>
</organism>
<accession>P0A7H1</accession>
<accession>P03016</accession>
<dbReference type="EMBL" id="AE014075">
    <property type="protein sequence ID" value="AAN83055.1"/>
    <property type="molecule type" value="Genomic_DNA"/>
</dbReference>
<dbReference type="RefSeq" id="WP_000060112.1">
    <property type="nucleotide sequence ID" value="NZ_CP051263.1"/>
</dbReference>
<dbReference type="SMR" id="P0A7H1"/>
<dbReference type="STRING" id="199310.c4622"/>
<dbReference type="GeneID" id="93778441"/>
<dbReference type="KEGG" id="ecc:c4622"/>
<dbReference type="eggNOG" id="COG1195">
    <property type="taxonomic scope" value="Bacteria"/>
</dbReference>
<dbReference type="HOGENOM" id="CLU_040267_0_0_6"/>
<dbReference type="BioCyc" id="ECOL199310:C4622-MONOMER"/>
<dbReference type="Proteomes" id="UP000001410">
    <property type="component" value="Chromosome"/>
</dbReference>
<dbReference type="GO" id="GO:0005737">
    <property type="term" value="C:cytoplasm"/>
    <property type="evidence" value="ECO:0007669"/>
    <property type="project" value="UniProtKB-SubCell"/>
</dbReference>
<dbReference type="GO" id="GO:0005524">
    <property type="term" value="F:ATP binding"/>
    <property type="evidence" value="ECO:0007669"/>
    <property type="project" value="UniProtKB-UniRule"/>
</dbReference>
<dbReference type="GO" id="GO:0003697">
    <property type="term" value="F:single-stranded DNA binding"/>
    <property type="evidence" value="ECO:0007669"/>
    <property type="project" value="UniProtKB-UniRule"/>
</dbReference>
<dbReference type="GO" id="GO:0006260">
    <property type="term" value="P:DNA replication"/>
    <property type="evidence" value="ECO:0007669"/>
    <property type="project" value="UniProtKB-UniRule"/>
</dbReference>
<dbReference type="GO" id="GO:0000731">
    <property type="term" value="P:DNA synthesis involved in DNA repair"/>
    <property type="evidence" value="ECO:0007669"/>
    <property type="project" value="TreeGrafter"/>
</dbReference>
<dbReference type="GO" id="GO:0006302">
    <property type="term" value="P:double-strand break repair"/>
    <property type="evidence" value="ECO:0007669"/>
    <property type="project" value="TreeGrafter"/>
</dbReference>
<dbReference type="GO" id="GO:0009432">
    <property type="term" value="P:SOS response"/>
    <property type="evidence" value="ECO:0007669"/>
    <property type="project" value="UniProtKB-UniRule"/>
</dbReference>
<dbReference type="FunFam" id="1.20.1050.90:FF:000001">
    <property type="entry name" value="DNA replication and repair protein RecF"/>
    <property type="match status" value="1"/>
</dbReference>
<dbReference type="Gene3D" id="3.40.50.300">
    <property type="entry name" value="P-loop containing nucleotide triphosphate hydrolases"/>
    <property type="match status" value="1"/>
</dbReference>
<dbReference type="Gene3D" id="1.20.1050.90">
    <property type="entry name" value="RecF/RecN/SMC, N-terminal domain"/>
    <property type="match status" value="1"/>
</dbReference>
<dbReference type="HAMAP" id="MF_00365">
    <property type="entry name" value="RecF"/>
    <property type="match status" value="1"/>
</dbReference>
<dbReference type="InterPro" id="IPR001238">
    <property type="entry name" value="DNA-binding_RecF"/>
</dbReference>
<dbReference type="InterPro" id="IPR018078">
    <property type="entry name" value="DNA-binding_RecF_CS"/>
</dbReference>
<dbReference type="InterPro" id="IPR027417">
    <property type="entry name" value="P-loop_NTPase"/>
</dbReference>
<dbReference type="InterPro" id="IPR003395">
    <property type="entry name" value="RecF/RecN/SMC_N"/>
</dbReference>
<dbReference type="InterPro" id="IPR042174">
    <property type="entry name" value="RecF_2"/>
</dbReference>
<dbReference type="NCBIfam" id="TIGR00611">
    <property type="entry name" value="recf"/>
    <property type="match status" value="1"/>
</dbReference>
<dbReference type="PANTHER" id="PTHR32182">
    <property type="entry name" value="DNA REPLICATION AND REPAIR PROTEIN RECF"/>
    <property type="match status" value="1"/>
</dbReference>
<dbReference type="PANTHER" id="PTHR32182:SF0">
    <property type="entry name" value="DNA REPLICATION AND REPAIR PROTEIN RECF"/>
    <property type="match status" value="1"/>
</dbReference>
<dbReference type="Pfam" id="PF02463">
    <property type="entry name" value="SMC_N"/>
    <property type="match status" value="1"/>
</dbReference>
<dbReference type="SUPFAM" id="SSF52540">
    <property type="entry name" value="P-loop containing nucleoside triphosphate hydrolases"/>
    <property type="match status" value="1"/>
</dbReference>
<dbReference type="PROSITE" id="PS00617">
    <property type="entry name" value="RECF_1"/>
    <property type="match status" value="1"/>
</dbReference>
<dbReference type="PROSITE" id="PS00618">
    <property type="entry name" value="RECF_2"/>
    <property type="match status" value="1"/>
</dbReference>
<keyword id="KW-0067">ATP-binding</keyword>
<keyword id="KW-0963">Cytoplasm</keyword>
<keyword id="KW-0227">DNA damage</keyword>
<keyword id="KW-0234">DNA repair</keyword>
<keyword id="KW-0235">DNA replication</keyword>
<keyword id="KW-0238">DNA-binding</keyword>
<keyword id="KW-0547">Nucleotide-binding</keyword>
<keyword id="KW-1185">Reference proteome</keyword>
<keyword id="KW-0742">SOS response</keyword>
<protein>
    <recommendedName>
        <fullName>DNA replication and repair protein RecF</fullName>
    </recommendedName>
</protein>
<comment type="function">
    <text evidence="1">The RecF protein is involved in DNA metabolism; it is required for DNA replication and normal SOS inducibility. RecF binds preferentially to single-stranded, linear DNA. It also seems to bind ATP (By similarity).</text>
</comment>
<comment type="subcellular location">
    <subcellularLocation>
        <location evidence="1">Cytoplasm</location>
    </subcellularLocation>
</comment>
<comment type="similarity">
    <text evidence="3">Belongs to the RecF family.</text>
</comment>